<reference key="1">
    <citation type="journal article" date="2001" name="Proc. Natl. Acad. Sci. U.S.A.">
        <title>Complete genome sequence of an M1 strain of Streptococcus pyogenes.</title>
        <authorList>
            <person name="Ferretti J.J."/>
            <person name="McShan W.M."/>
            <person name="Ajdic D.J."/>
            <person name="Savic D.J."/>
            <person name="Savic G."/>
            <person name="Lyon K."/>
            <person name="Primeaux C."/>
            <person name="Sezate S."/>
            <person name="Suvorov A.N."/>
            <person name="Kenton S."/>
            <person name="Lai H.S."/>
            <person name="Lin S.P."/>
            <person name="Qian Y."/>
            <person name="Jia H.G."/>
            <person name="Najar F.Z."/>
            <person name="Ren Q."/>
            <person name="Zhu H."/>
            <person name="Song L."/>
            <person name="White J."/>
            <person name="Yuan X."/>
            <person name="Clifton S.W."/>
            <person name="Roe B.A."/>
            <person name="McLaughlin R.E."/>
        </authorList>
    </citation>
    <scope>NUCLEOTIDE SEQUENCE [LARGE SCALE GENOMIC DNA]</scope>
    <source>
        <strain>ATCC 700294 / SF370 / Serotype M1</strain>
    </source>
</reference>
<reference key="2">
    <citation type="journal article" date="2005" name="J. Infect. Dis.">
        <title>Evolutionary origin and emergence of a highly successful clone of serotype M1 group A Streptococcus involved multiple horizontal gene transfer events.</title>
        <authorList>
            <person name="Sumby P."/>
            <person name="Porcella S.F."/>
            <person name="Madrigal A.G."/>
            <person name="Barbian K.D."/>
            <person name="Virtaneva K."/>
            <person name="Ricklefs S.M."/>
            <person name="Sturdevant D.E."/>
            <person name="Graham M.R."/>
            <person name="Vuopio-Varkila J."/>
            <person name="Hoe N.P."/>
            <person name="Musser J.M."/>
        </authorList>
    </citation>
    <scope>NUCLEOTIDE SEQUENCE [LARGE SCALE GENOMIC DNA]</scope>
    <source>
        <strain>ATCC BAA-947 / MGAS5005 / Serotype M1</strain>
    </source>
</reference>
<protein>
    <recommendedName>
        <fullName evidence="1">NAD kinase</fullName>
        <ecNumber evidence="1">2.7.1.23</ecNumber>
    </recommendedName>
    <alternativeName>
        <fullName evidence="1">ATP-dependent NAD kinase</fullName>
    </alternativeName>
</protein>
<evidence type="ECO:0000255" key="1">
    <source>
        <dbReference type="HAMAP-Rule" id="MF_00361"/>
    </source>
</evidence>
<comment type="function">
    <text evidence="1">Involved in the regulation of the intracellular balance of NAD and NADP, and is a key enzyme in the biosynthesis of NADP. Catalyzes specifically the phosphorylation on 2'-hydroxyl of the adenosine moiety of NAD to yield NADP.</text>
</comment>
<comment type="catalytic activity">
    <reaction evidence="1">
        <text>NAD(+) + ATP = ADP + NADP(+) + H(+)</text>
        <dbReference type="Rhea" id="RHEA:18629"/>
        <dbReference type="ChEBI" id="CHEBI:15378"/>
        <dbReference type="ChEBI" id="CHEBI:30616"/>
        <dbReference type="ChEBI" id="CHEBI:57540"/>
        <dbReference type="ChEBI" id="CHEBI:58349"/>
        <dbReference type="ChEBI" id="CHEBI:456216"/>
        <dbReference type="EC" id="2.7.1.23"/>
    </reaction>
</comment>
<comment type="cofactor">
    <cofactor evidence="1">
        <name>a divalent metal cation</name>
        <dbReference type="ChEBI" id="CHEBI:60240"/>
    </cofactor>
</comment>
<comment type="subcellular location">
    <subcellularLocation>
        <location evidence="1">Cytoplasm</location>
    </subcellularLocation>
</comment>
<comment type="similarity">
    <text evidence="1">Belongs to the NAD kinase family.</text>
</comment>
<organism>
    <name type="scientific">Streptococcus pyogenes serotype M1</name>
    <dbReference type="NCBI Taxonomy" id="301447"/>
    <lineage>
        <taxon>Bacteria</taxon>
        <taxon>Bacillati</taxon>
        <taxon>Bacillota</taxon>
        <taxon>Bacilli</taxon>
        <taxon>Lactobacillales</taxon>
        <taxon>Streptococcaceae</taxon>
        <taxon>Streptococcus</taxon>
    </lineage>
</organism>
<keyword id="KW-0067">ATP-binding</keyword>
<keyword id="KW-0963">Cytoplasm</keyword>
<keyword id="KW-0418">Kinase</keyword>
<keyword id="KW-0520">NAD</keyword>
<keyword id="KW-0521">NADP</keyword>
<keyword id="KW-0547">Nucleotide-binding</keyword>
<keyword id="KW-1185">Reference proteome</keyword>
<keyword id="KW-0808">Transferase</keyword>
<proteinExistence type="inferred from homology"/>
<gene>
    <name evidence="1" type="primary">nadK</name>
    <name type="ordered locus">SPy_1126</name>
    <name type="ordered locus">M5005_Spy0848</name>
</gene>
<sequence>MTQMNYTGKVKRVAIIANGKYQSKRVASKLFSVFKDDPDFYLSKKNPDIVISIGGDGMLLSAFHMYEKELDKVRFVGIHTGHLGFYTDYRDFEVDKLIDNLRKDKGEQISYPILKVAITLDDGRVVKARALNEATVKRIEKTMVADVIINHVKFESFRGDGISVSTPTGSTAYNKSLGGAVLHPTIEALQLTEISSLNNRVFRTLGSSIIIPKKDKIELVPKRLGIYTISIDNKTYQLKNVTKVEYFIDDEKIHFVSSPSHTSFWERVKDAFIGEIDS</sequence>
<accession>P65781</accession>
<accession>Q48YV6</accession>
<accession>Q99ZQ7</accession>
<name>NADK_STRP1</name>
<feature type="chain" id="PRO_0000120672" description="NAD kinase">
    <location>
        <begin position="1"/>
        <end position="278"/>
    </location>
</feature>
<feature type="active site" description="Proton acceptor" evidence="1">
    <location>
        <position position="56"/>
    </location>
</feature>
<feature type="binding site" evidence="1">
    <location>
        <begin position="56"/>
        <end position="57"/>
    </location>
    <ligand>
        <name>NAD(+)</name>
        <dbReference type="ChEBI" id="CHEBI:57540"/>
    </ligand>
</feature>
<feature type="binding site" evidence="1">
    <location>
        <begin position="132"/>
        <end position="133"/>
    </location>
    <ligand>
        <name>NAD(+)</name>
        <dbReference type="ChEBI" id="CHEBI:57540"/>
    </ligand>
</feature>
<feature type="binding site" evidence="1">
    <location>
        <position position="158"/>
    </location>
    <ligand>
        <name>NAD(+)</name>
        <dbReference type="ChEBI" id="CHEBI:57540"/>
    </ligand>
</feature>
<feature type="binding site" evidence="1">
    <location>
        <position position="160"/>
    </location>
    <ligand>
        <name>NAD(+)</name>
        <dbReference type="ChEBI" id="CHEBI:57540"/>
    </ligand>
</feature>
<feature type="binding site" evidence="1">
    <location>
        <begin position="171"/>
        <end position="176"/>
    </location>
    <ligand>
        <name>NAD(+)</name>
        <dbReference type="ChEBI" id="CHEBI:57540"/>
    </ligand>
</feature>
<dbReference type="EC" id="2.7.1.23" evidence="1"/>
<dbReference type="EMBL" id="AE004092">
    <property type="protein sequence ID" value="AAK34001.1"/>
    <property type="molecule type" value="Genomic_DNA"/>
</dbReference>
<dbReference type="EMBL" id="CP000017">
    <property type="protein sequence ID" value="AAZ51466.1"/>
    <property type="molecule type" value="Genomic_DNA"/>
</dbReference>
<dbReference type="RefSeq" id="NP_269280.1">
    <property type="nucleotide sequence ID" value="NC_002737.2"/>
</dbReference>
<dbReference type="SMR" id="P65781"/>
<dbReference type="PaxDb" id="1314-HKU360_00912"/>
<dbReference type="KEGG" id="spy:SPy_1126"/>
<dbReference type="KEGG" id="spz:M5005_Spy0848"/>
<dbReference type="PATRIC" id="fig|160490.10.peg.980"/>
<dbReference type="HOGENOM" id="CLU_008831_0_3_9"/>
<dbReference type="OMA" id="YRHTHFW"/>
<dbReference type="Proteomes" id="UP000000750">
    <property type="component" value="Chromosome"/>
</dbReference>
<dbReference type="GO" id="GO:0005737">
    <property type="term" value="C:cytoplasm"/>
    <property type="evidence" value="ECO:0007669"/>
    <property type="project" value="UniProtKB-SubCell"/>
</dbReference>
<dbReference type="GO" id="GO:0005524">
    <property type="term" value="F:ATP binding"/>
    <property type="evidence" value="ECO:0007669"/>
    <property type="project" value="UniProtKB-KW"/>
</dbReference>
<dbReference type="GO" id="GO:0046872">
    <property type="term" value="F:metal ion binding"/>
    <property type="evidence" value="ECO:0007669"/>
    <property type="project" value="UniProtKB-UniRule"/>
</dbReference>
<dbReference type="GO" id="GO:0051287">
    <property type="term" value="F:NAD binding"/>
    <property type="evidence" value="ECO:0007669"/>
    <property type="project" value="UniProtKB-ARBA"/>
</dbReference>
<dbReference type="GO" id="GO:0003951">
    <property type="term" value="F:NAD+ kinase activity"/>
    <property type="evidence" value="ECO:0007669"/>
    <property type="project" value="UniProtKB-UniRule"/>
</dbReference>
<dbReference type="GO" id="GO:0019674">
    <property type="term" value="P:NAD metabolic process"/>
    <property type="evidence" value="ECO:0007669"/>
    <property type="project" value="InterPro"/>
</dbReference>
<dbReference type="GO" id="GO:0006741">
    <property type="term" value="P:NADP biosynthetic process"/>
    <property type="evidence" value="ECO:0007669"/>
    <property type="project" value="UniProtKB-UniRule"/>
</dbReference>
<dbReference type="Gene3D" id="3.40.50.10330">
    <property type="entry name" value="Probable inorganic polyphosphate/atp-NAD kinase, domain 1"/>
    <property type="match status" value="1"/>
</dbReference>
<dbReference type="Gene3D" id="2.60.200.30">
    <property type="entry name" value="Probable inorganic polyphosphate/atp-NAD kinase, domain 2"/>
    <property type="match status" value="1"/>
</dbReference>
<dbReference type="HAMAP" id="MF_00361">
    <property type="entry name" value="NAD_kinase"/>
    <property type="match status" value="1"/>
</dbReference>
<dbReference type="InterPro" id="IPR017438">
    <property type="entry name" value="ATP-NAD_kinase_N"/>
</dbReference>
<dbReference type="InterPro" id="IPR017437">
    <property type="entry name" value="ATP-NAD_kinase_PpnK-typ_C"/>
</dbReference>
<dbReference type="InterPro" id="IPR016064">
    <property type="entry name" value="NAD/diacylglycerol_kinase_sf"/>
</dbReference>
<dbReference type="InterPro" id="IPR002504">
    <property type="entry name" value="NADK"/>
</dbReference>
<dbReference type="NCBIfam" id="NF003424">
    <property type="entry name" value="PRK04885.1"/>
    <property type="match status" value="1"/>
</dbReference>
<dbReference type="PANTHER" id="PTHR20275">
    <property type="entry name" value="NAD KINASE"/>
    <property type="match status" value="1"/>
</dbReference>
<dbReference type="PANTHER" id="PTHR20275:SF0">
    <property type="entry name" value="NAD KINASE"/>
    <property type="match status" value="1"/>
</dbReference>
<dbReference type="Pfam" id="PF01513">
    <property type="entry name" value="NAD_kinase"/>
    <property type="match status" value="1"/>
</dbReference>
<dbReference type="Pfam" id="PF20143">
    <property type="entry name" value="NAD_kinase_C"/>
    <property type="match status" value="1"/>
</dbReference>
<dbReference type="SUPFAM" id="SSF111331">
    <property type="entry name" value="NAD kinase/diacylglycerol kinase-like"/>
    <property type="match status" value="1"/>
</dbReference>